<sequence length="376" mass="41128">MVKQDYYEILGVSKTAEEREIRKAYKRLAMKYHPDRNQGDKEAEAKFKEIKEAYEVLTDSQKRAAYDQYGHAAFEQGGMGGGGFGGGADFSDIFGDVFGDIFGGGRGRQRAARGADLRYNMELTLEEAVRGVTKEIRIPTLEECDVCHGSGAKPGTQPQTCPTCHGSGQVQMRQGFFAVQQTCPHCQGRGTLIKDPCNKCHGHGRVERSKTLSVKIPAGVDTGDRIRLAGEGEAGEHGAPAGDLYVQVQVKQHPIFEREGNNLYCEVPINFAMAALGGEIEVPTLDGRVKLKVPGETQTGKLFRMRGKGVKSVRGGAQGDLLCRVVVETPVGLNERQKQLLQELQESFGGPTGEHNSPRSKSFFDGVKKFFDDLTR</sequence>
<name>DNAJ_ECOBW</name>
<accession>C4ZPU1</accession>
<comment type="function">
    <text evidence="1">Participates actively in the response to hyperosmotic and heat shock by preventing the aggregation of stress-denatured proteins and by disaggregating proteins, also in an autonomous, DnaK-independent fashion. Unfolded proteins bind initially to DnaJ; upon interaction with the DnaJ-bound protein, DnaK hydrolyzes its bound ATP, resulting in the formation of a stable complex. GrpE releases ADP from DnaK; ATP binding to DnaK triggers the release of the substrate protein, thus completing the reaction cycle. Several rounds of ATP-dependent interactions between DnaJ, DnaK and GrpE are required for fully efficient folding. Also involved, together with DnaK and GrpE, in the DNA replication of plasmids through activation of initiation proteins.</text>
</comment>
<comment type="cofactor">
    <cofactor evidence="1">
        <name>Zn(2+)</name>
        <dbReference type="ChEBI" id="CHEBI:29105"/>
    </cofactor>
    <text evidence="1">Binds 2 Zn(2+) ions per monomer.</text>
</comment>
<comment type="subunit">
    <text evidence="1">Homodimer.</text>
</comment>
<comment type="subcellular location">
    <subcellularLocation>
        <location evidence="1">Cytoplasm</location>
    </subcellularLocation>
</comment>
<comment type="domain">
    <text evidence="1">The J domain is necessary and sufficient to stimulate DnaK ATPase activity. Zinc center 1 plays an important role in the autonomous, DnaK-independent chaperone activity of DnaJ. Zinc center 2 is essential for interaction with DnaK and for DnaJ activity.</text>
</comment>
<comment type="similarity">
    <text evidence="1">Belongs to the DnaJ family.</text>
</comment>
<feature type="chain" id="PRO_1000213680" description="Chaperone protein DnaJ">
    <location>
        <begin position="1"/>
        <end position="376"/>
    </location>
</feature>
<feature type="domain" description="J" evidence="1">
    <location>
        <begin position="5"/>
        <end position="70"/>
    </location>
</feature>
<feature type="repeat" description="CXXCXGXG motif">
    <location>
        <begin position="144"/>
        <end position="151"/>
    </location>
</feature>
<feature type="repeat" description="CXXCXGXG motif">
    <location>
        <begin position="161"/>
        <end position="168"/>
    </location>
</feature>
<feature type="repeat" description="CXXCXGXG motif">
    <location>
        <begin position="183"/>
        <end position="190"/>
    </location>
</feature>
<feature type="repeat" description="CXXCXGXG motif">
    <location>
        <begin position="197"/>
        <end position="204"/>
    </location>
</feature>
<feature type="zinc finger region" description="CR-type" evidence="1">
    <location>
        <begin position="131"/>
        <end position="209"/>
    </location>
</feature>
<feature type="binding site" evidence="1">
    <location>
        <position position="144"/>
    </location>
    <ligand>
        <name>Zn(2+)</name>
        <dbReference type="ChEBI" id="CHEBI:29105"/>
        <label>1</label>
    </ligand>
</feature>
<feature type="binding site" evidence="1">
    <location>
        <position position="147"/>
    </location>
    <ligand>
        <name>Zn(2+)</name>
        <dbReference type="ChEBI" id="CHEBI:29105"/>
        <label>1</label>
    </ligand>
</feature>
<feature type="binding site" evidence="1">
    <location>
        <position position="161"/>
    </location>
    <ligand>
        <name>Zn(2+)</name>
        <dbReference type="ChEBI" id="CHEBI:29105"/>
        <label>2</label>
    </ligand>
</feature>
<feature type="binding site" evidence="1">
    <location>
        <position position="164"/>
    </location>
    <ligand>
        <name>Zn(2+)</name>
        <dbReference type="ChEBI" id="CHEBI:29105"/>
        <label>2</label>
    </ligand>
</feature>
<feature type="binding site" evidence="1">
    <location>
        <position position="183"/>
    </location>
    <ligand>
        <name>Zn(2+)</name>
        <dbReference type="ChEBI" id="CHEBI:29105"/>
        <label>2</label>
    </ligand>
</feature>
<feature type="binding site" evidence="1">
    <location>
        <position position="186"/>
    </location>
    <ligand>
        <name>Zn(2+)</name>
        <dbReference type="ChEBI" id="CHEBI:29105"/>
        <label>2</label>
    </ligand>
</feature>
<feature type="binding site" evidence="1">
    <location>
        <position position="197"/>
    </location>
    <ligand>
        <name>Zn(2+)</name>
        <dbReference type="ChEBI" id="CHEBI:29105"/>
        <label>1</label>
    </ligand>
</feature>
<feature type="binding site" evidence="1">
    <location>
        <position position="200"/>
    </location>
    <ligand>
        <name>Zn(2+)</name>
        <dbReference type="ChEBI" id="CHEBI:29105"/>
        <label>1</label>
    </ligand>
</feature>
<dbReference type="EMBL" id="CP001396">
    <property type="protein sequence ID" value="ACR62136.1"/>
    <property type="molecule type" value="Genomic_DNA"/>
</dbReference>
<dbReference type="RefSeq" id="WP_000240600.1">
    <property type="nucleotide sequence ID" value="NC_012759.1"/>
</dbReference>
<dbReference type="SMR" id="C4ZPU1"/>
<dbReference type="IntAct" id="C4ZPU1">
    <property type="interactions" value="1"/>
</dbReference>
<dbReference type="KEGG" id="ebw:BWG_0014"/>
<dbReference type="HOGENOM" id="CLU_017633_0_7_6"/>
<dbReference type="GO" id="GO:0005737">
    <property type="term" value="C:cytoplasm"/>
    <property type="evidence" value="ECO:0007669"/>
    <property type="project" value="UniProtKB-SubCell"/>
</dbReference>
<dbReference type="GO" id="GO:0005524">
    <property type="term" value="F:ATP binding"/>
    <property type="evidence" value="ECO:0007669"/>
    <property type="project" value="InterPro"/>
</dbReference>
<dbReference type="GO" id="GO:0031072">
    <property type="term" value="F:heat shock protein binding"/>
    <property type="evidence" value="ECO:0007669"/>
    <property type="project" value="InterPro"/>
</dbReference>
<dbReference type="GO" id="GO:0051082">
    <property type="term" value="F:unfolded protein binding"/>
    <property type="evidence" value="ECO:0007669"/>
    <property type="project" value="UniProtKB-UniRule"/>
</dbReference>
<dbReference type="GO" id="GO:0008270">
    <property type="term" value="F:zinc ion binding"/>
    <property type="evidence" value="ECO:0007669"/>
    <property type="project" value="UniProtKB-UniRule"/>
</dbReference>
<dbReference type="GO" id="GO:0051085">
    <property type="term" value="P:chaperone cofactor-dependent protein refolding"/>
    <property type="evidence" value="ECO:0007669"/>
    <property type="project" value="TreeGrafter"/>
</dbReference>
<dbReference type="GO" id="GO:0006260">
    <property type="term" value="P:DNA replication"/>
    <property type="evidence" value="ECO:0007669"/>
    <property type="project" value="UniProtKB-KW"/>
</dbReference>
<dbReference type="GO" id="GO:0042026">
    <property type="term" value="P:protein refolding"/>
    <property type="evidence" value="ECO:0007669"/>
    <property type="project" value="TreeGrafter"/>
</dbReference>
<dbReference type="GO" id="GO:0009408">
    <property type="term" value="P:response to heat"/>
    <property type="evidence" value="ECO:0007669"/>
    <property type="project" value="InterPro"/>
</dbReference>
<dbReference type="CDD" id="cd06257">
    <property type="entry name" value="DnaJ"/>
    <property type="match status" value="1"/>
</dbReference>
<dbReference type="CDD" id="cd10747">
    <property type="entry name" value="DnaJ_C"/>
    <property type="match status" value="1"/>
</dbReference>
<dbReference type="CDD" id="cd10719">
    <property type="entry name" value="DnaJ_zf"/>
    <property type="match status" value="1"/>
</dbReference>
<dbReference type="FunFam" id="1.10.287.110:FF:000003">
    <property type="entry name" value="Molecular chaperone DnaJ"/>
    <property type="match status" value="1"/>
</dbReference>
<dbReference type="FunFam" id="2.10.230.10:FF:000002">
    <property type="entry name" value="Molecular chaperone DnaJ"/>
    <property type="match status" value="1"/>
</dbReference>
<dbReference type="FunFam" id="2.60.260.20:FF:000004">
    <property type="entry name" value="Molecular chaperone DnaJ"/>
    <property type="match status" value="1"/>
</dbReference>
<dbReference type="Gene3D" id="1.10.287.110">
    <property type="entry name" value="DnaJ domain"/>
    <property type="match status" value="1"/>
</dbReference>
<dbReference type="Gene3D" id="2.10.230.10">
    <property type="entry name" value="Heat shock protein DnaJ, cysteine-rich domain"/>
    <property type="match status" value="1"/>
</dbReference>
<dbReference type="Gene3D" id="2.60.260.20">
    <property type="entry name" value="Urease metallochaperone UreE, N-terminal domain"/>
    <property type="match status" value="2"/>
</dbReference>
<dbReference type="HAMAP" id="MF_01152">
    <property type="entry name" value="DnaJ"/>
    <property type="match status" value="1"/>
</dbReference>
<dbReference type="InterPro" id="IPR012724">
    <property type="entry name" value="DnaJ"/>
</dbReference>
<dbReference type="InterPro" id="IPR002939">
    <property type="entry name" value="DnaJ_C"/>
</dbReference>
<dbReference type="InterPro" id="IPR001623">
    <property type="entry name" value="DnaJ_domain"/>
</dbReference>
<dbReference type="InterPro" id="IPR018253">
    <property type="entry name" value="DnaJ_domain_CS"/>
</dbReference>
<dbReference type="InterPro" id="IPR008971">
    <property type="entry name" value="HSP40/DnaJ_pept-bd"/>
</dbReference>
<dbReference type="InterPro" id="IPR001305">
    <property type="entry name" value="HSP_DnaJ_Cys-rich_dom"/>
</dbReference>
<dbReference type="InterPro" id="IPR036410">
    <property type="entry name" value="HSP_DnaJ_Cys-rich_dom_sf"/>
</dbReference>
<dbReference type="InterPro" id="IPR036869">
    <property type="entry name" value="J_dom_sf"/>
</dbReference>
<dbReference type="NCBIfam" id="TIGR02349">
    <property type="entry name" value="DnaJ_bact"/>
    <property type="match status" value="1"/>
</dbReference>
<dbReference type="NCBIfam" id="NF008035">
    <property type="entry name" value="PRK10767.1"/>
    <property type="match status" value="1"/>
</dbReference>
<dbReference type="PANTHER" id="PTHR43096:SF48">
    <property type="entry name" value="CHAPERONE PROTEIN DNAJ"/>
    <property type="match status" value="1"/>
</dbReference>
<dbReference type="PANTHER" id="PTHR43096">
    <property type="entry name" value="DNAJ HOMOLOG 1, MITOCHONDRIAL-RELATED"/>
    <property type="match status" value="1"/>
</dbReference>
<dbReference type="Pfam" id="PF00226">
    <property type="entry name" value="DnaJ"/>
    <property type="match status" value="1"/>
</dbReference>
<dbReference type="Pfam" id="PF01556">
    <property type="entry name" value="DnaJ_C"/>
    <property type="match status" value="1"/>
</dbReference>
<dbReference type="Pfam" id="PF00684">
    <property type="entry name" value="DnaJ_CXXCXGXG"/>
    <property type="match status" value="1"/>
</dbReference>
<dbReference type="PRINTS" id="PR00625">
    <property type="entry name" value="JDOMAIN"/>
</dbReference>
<dbReference type="SMART" id="SM00271">
    <property type="entry name" value="DnaJ"/>
    <property type="match status" value="1"/>
</dbReference>
<dbReference type="SUPFAM" id="SSF46565">
    <property type="entry name" value="Chaperone J-domain"/>
    <property type="match status" value="1"/>
</dbReference>
<dbReference type="SUPFAM" id="SSF57938">
    <property type="entry name" value="DnaJ/Hsp40 cysteine-rich domain"/>
    <property type="match status" value="1"/>
</dbReference>
<dbReference type="SUPFAM" id="SSF49493">
    <property type="entry name" value="HSP40/DnaJ peptide-binding domain"/>
    <property type="match status" value="2"/>
</dbReference>
<dbReference type="PROSITE" id="PS00636">
    <property type="entry name" value="DNAJ_1"/>
    <property type="match status" value="1"/>
</dbReference>
<dbReference type="PROSITE" id="PS50076">
    <property type="entry name" value="DNAJ_2"/>
    <property type="match status" value="1"/>
</dbReference>
<dbReference type="PROSITE" id="PS51188">
    <property type="entry name" value="ZF_CR"/>
    <property type="match status" value="1"/>
</dbReference>
<protein>
    <recommendedName>
        <fullName evidence="1">Chaperone protein DnaJ</fullName>
    </recommendedName>
</protein>
<proteinExistence type="inferred from homology"/>
<organism>
    <name type="scientific">Escherichia coli (strain K12 / MC4100 / BW2952)</name>
    <dbReference type="NCBI Taxonomy" id="595496"/>
    <lineage>
        <taxon>Bacteria</taxon>
        <taxon>Pseudomonadati</taxon>
        <taxon>Pseudomonadota</taxon>
        <taxon>Gammaproteobacteria</taxon>
        <taxon>Enterobacterales</taxon>
        <taxon>Enterobacteriaceae</taxon>
        <taxon>Escherichia</taxon>
    </lineage>
</organism>
<evidence type="ECO:0000255" key="1">
    <source>
        <dbReference type="HAMAP-Rule" id="MF_01152"/>
    </source>
</evidence>
<gene>
    <name evidence="1" type="primary">dnaJ</name>
    <name type="ordered locus">BWG_0014</name>
</gene>
<reference key="1">
    <citation type="journal article" date="2009" name="J. Bacteriol.">
        <title>Genomic sequencing reveals regulatory mutations and recombinational events in the widely used MC4100 lineage of Escherichia coli K-12.</title>
        <authorList>
            <person name="Ferenci T."/>
            <person name="Zhou Z."/>
            <person name="Betteridge T."/>
            <person name="Ren Y."/>
            <person name="Liu Y."/>
            <person name="Feng L."/>
            <person name="Reeves P.R."/>
            <person name="Wang L."/>
        </authorList>
    </citation>
    <scope>NUCLEOTIDE SEQUENCE [LARGE SCALE GENOMIC DNA]</scope>
    <source>
        <strain>K12 / MC4100 / BW2952</strain>
    </source>
</reference>
<keyword id="KW-0143">Chaperone</keyword>
<keyword id="KW-0963">Cytoplasm</keyword>
<keyword id="KW-0235">DNA replication</keyword>
<keyword id="KW-0479">Metal-binding</keyword>
<keyword id="KW-0677">Repeat</keyword>
<keyword id="KW-0346">Stress response</keyword>
<keyword id="KW-0862">Zinc</keyword>
<keyword id="KW-0863">Zinc-finger</keyword>